<name>TRPA_NITHX</name>
<evidence type="ECO:0000255" key="1">
    <source>
        <dbReference type="HAMAP-Rule" id="MF_00131"/>
    </source>
</evidence>
<keyword id="KW-0028">Amino-acid biosynthesis</keyword>
<keyword id="KW-0057">Aromatic amino acid biosynthesis</keyword>
<keyword id="KW-0456">Lyase</keyword>
<keyword id="KW-1185">Reference proteome</keyword>
<keyword id="KW-0822">Tryptophan biosynthesis</keyword>
<organism>
    <name type="scientific">Nitrobacter hamburgensis (strain DSM 10229 / NCIMB 13809 / X14)</name>
    <dbReference type="NCBI Taxonomy" id="323097"/>
    <lineage>
        <taxon>Bacteria</taxon>
        <taxon>Pseudomonadati</taxon>
        <taxon>Pseudomonadota</taxon>
        <taxon>Alphaproteobacteria</taxon>
        <taxon>Hyphomicrobiales</taxon>
        <taxon>Nitrobacteraceae</taxon>
        <taxon>Nitrobacter</taxon>
    </lineage>
</organism>
<dbReference type="EC" id="4.2.1.20" evidence="1"/>
<dbReference type="EMBL" id="CP000319">
    <property type="protein sequence ID" value="ABE60963.1"/>
    <property type="molecule type" value="Genomic_DNA"/>
</dbReference>
<dbReference type="RefSeq" id="WP_011508670.1">
    <property type="nucleotide sequence ID" value="NC_007964.1"/>
</dbReference>
<dbReference type="SMR" id="Q1QS34"/>
<dbReference type="STRING" id="323097.Nham_0062"/>
<dbReference type="KEGG" id="nha:Nham_0062"/>
<dbReference type="eggNOG" id="COG0159">
    <property type="taxonomic scope" value="Bacteria"/>
</dbReference>
<dbReference type="HOGENOM" id="CLU_016734_0_0_5"/>
<dbReference type="OrthoDB" id="9804578at2"/>
<dbReference type="UniPathway" id="UPA00035">
    <property type="reaction ID" value="UER00044"/>
</dbReference>
<dbReference type="Proteomes" id="UP000001953">
    <property type="component" value="Chromosome"/>
</dbReference>
<dbReference type="GO" id="GO:0005829">
    <property type="term" value="C:cytosol"/>
    <property type="evidence" value="ECO:0007669"/>
    <property type="project" value="TreeGrafter"/>
</dbReference>
<dbReference type="GO" id="GO:0004834">
    <property type="term" value="F:tryptophan synthase activity"/>
    <property type="evidence" value="ECO:0007669"/>
    <property type="project" value="UniProtKB-UniRule"/>
</dbReference>
<dbReference type="CDD" id="cd04724">
    <property type="entry name" value="Tryptophan_synthase_alpha"/>
    <property type="match status" value="1"/>
</dbReference>
<dbReference type="FunFam" id="3.20.20.70:FF:000037">
    <property type="entry name" value="Tryptophan synthase alpha chain"/>
    <property type="match status" value="1"/>
</dbReference>
<dbReference type="Gene3D" id="3.20.20.70">
    <property type="entry name" value="Aldolase class I"/>
    <property type="match status" value="1"/>
</dbReference>
<dbReference type="HAMAP" id="MF_00131">
    <property type="entry name" value="Trp_synth_alpha"/>
    <property type="match status" value="1"/>
</dbReference>
<dbReference type="InterPro" id="IPR013785">
    <property type="entry name" value="Aldolase_TIM"/>
</dbReference>
<dbReference type="InterPro" id="IPR011060">
    <property type="entry name" value="RibuloseP-bd_barrel"/>
</dbReference>
<dbReference type="InterPro" id="IPR018204">
    <property type="entry name" value="Trp_synthase_alpha_AS"/>
</dbReference>
<dbReference type="InterPro" id="IPR002028">
    <property type="entry name" value="Trp_synthase_suA"/>
</dbReference>
<dbReference type="NCBIfam" id="TIGR00262">
    <property type="entry name" value="trpA"/>
    <property type="match status" value="1"/>
</dbReference>
<dbReference type="PANTHER" id="PTHR43406:SF1">
    <property type="entry name" value="TRYPTOPHAN SYNTHASE ALPHA CHAIN, CHLOROPLASTIC"/>
    <property type="match status" value="1"/>
</dbReference>
<dbReference type="PANTHER" id="PTHR43406">
    <property type="entry name" value="TRYPTOPHAN SYNTHASE, ALPHA CHAIN"/>
    <property type="match status" value="1"/>
</dbReference>
<dbReference type="Pfam" id="PF00290">
    <property type="entry name" value="Trp_syntA"/>
    <property type="match status" value="1"/>
</dbReference>
<dbReference type="SUPFAM" id="SSF51366">
    <property type="entry name" value="Ribulose-phoshate binding barrel"/>
    <property type="match status" value="1"/>
</dbReference>
<dbReference type="PROSITE" id="PS00167">
    <property type="entry name" value="TRP_SYNTHASE_ALPHA"/>
    <property type="match status" value="1"/>
</dbReference>
<sequence>MTTRIDTRFAELKKQGRSAFVTFLMGGDPDPATSLAIIKALPKAGADIIEIGMPFTDPMADGPAVQAAGRRALNAGMTVTRTLQMIHDFRKGEGSTPVVLMGYYNPIYIYGVEKFLTDAKAAGVDGLIVVDLPPEEDSELCIPAMKAGLNFIRLATPTTDDKRLPAVLANTSGFVYYVSITGITGSAAADSTAVGAAVARIKRHTTLPVCVGFGIRTADAARGIAERSDGAVVGSALVDALSGSLDAEGKATAKTVNAVADLAAALAAGVRSARQAAE</sequence>
<comment type="function">
    <text evidence="1">The alpha subunit is responsible for the aldol cleavage of indoleglycerol phosphate to indole and glyceraldehyde 3-phosphate.</text>
</comment>
<comment type="catalytic activity">
    <reaction evidence="1">
        <text>(1S,2R)-1-C-(indol-3-yl)glycerol 3-phosphate + L-serine = D-glyceraldehyde 3-phosphate + L-tryptophan + H2O</text>
        <dbReference type="Rhea" id="RHEA:10532"/>
        <dbReference type="ChEBI" id="CHEBI:15377"/>
        <dbReference type="ChEBI" id="CHEBI:33384"/>
        <dbReference type="ChEBI" id="CHEBI:57912"/>
        <dbReference type="ChEBI" id="CHEBI:58866"/>
        <dbReference type="ChEBI" id="CHEBI:59776"/>
        <dbReference type="EC" id="4.2.1.20"/>
    </reaction>
</comment>
<comment type="pathway">
    <text evidence="1">Amino-acid biosynthesis; L-tryptophan biosynthesis; L-tryptophan from chorismate: step 5/5.</text>
</comment>
<comment type="subunit">
    <text evidence="1">Tetramer of two alpha and two beta chains.</text>
</comment>
<comment type="similarity">
    <text evidence="1">Belongs to the TrpA family.</text>
</comment>
<feature type="chain" id="PRO_1000018237" description="Tryptophan synthase alpha chain">
    <location>
        <begin position="1"/>
        <end position="278"/>
    </location>
</feature>
<feature type="active site" description="Proton acceptor" evidence="1">
    <location>
        <position position="50"/>
    </location>
</feature>
<feature type="active site" description="Proton acceptor" evidence="1">
    <location>
        <position position="61"/>
    </location>
</feature>
<accession>Q1QS34</accession>
<gene>
    <name evidence="1" type="primary">trpA</name>
    <name type="ordered locus">Nham_0062</name>
</gene>
<protein>
    <recommendedName>
        <fullName evidence="1">Tryptophan synthase alpha chain</fullName>
        <ecNumber evidence="1">4.2.1.20</ecNumber>
    </recommendedName>
</protein>
<proteinExistence type="inferred from homology"/>
<reference key="1">
    <citation type="submission" date="2006-03" db="EMBL/GenBank/DDBJ databases">
        <title>Complete sequence of chromosome of Nitrobacter hamburgensis X14.</title>
        <authorList>
            <consortium name="US DOE Joint Genome Institute"/>
            <person name="Copeland A."/>
            <person name="Lucas S."/>
            <person name="Lapidus A."/>
            <person name="Barry K."/>
            <person name="Detter J.C."/>
            <person name="Glavina del Rio T."/>
            <person name="Hammon N."/>
            <person name="Israni S."/>
            <person name="Dalin E."/>
            <person name="Tice H."/>
            <person name="Pitluck S."/>
            <person name="Chain P."/>
            <person name="Malfatti S."/>
            <person name="Shin M."/>
            <person name="Vergez L."/>
            <person name="Schmutz J."/>
            <person name="Larimer F."/>
            <person name="Land M."/>
            <person name="Hauser L."/>
            <person name="Kyrpides N."/>
            <person name="Ivanova N."/>
            <person name="Ward B."/>
            <person name="Arp D."/>
            <person name="Klotz M."/>
            <person name="Stein L."/>
            <person name="O'Mullan G."/>
            <person name="Starkenburg S."/>
            <person name="Sayavedra L."/>
            <person name="Poret-Peterson A.T."/>
            <person name="Gentry M.E."/>
            <person name="Bruce D."/>
            <person name="Richardson P."/>
        </authorList>
    </citation>
    <scope>NUCLEOTIDE SEQUENCE [LARGE SCALE GENOMIC DNA]</scope>
    <source>
        <strain>DSM 10229 / NCIMB 13809 / X14</strain>
    </source>
</reference>